<proteinExistence type="inferred from homology"/>
<dbReference type="EC" id="6.3.2.8" evidence="1"/>
<dbReference type="EMBL" id="AP011115">
    <property type="protein sequence ID" value="BAH49062.1"/>
    <property type="molecule type" value="Genomic_DNA"/>
</dbReference>
<dbReference type="RefSeq" id="WP_012688057.1">
    <property type="nucleotide sequence ID" value="NC_012522.1"/>
</dbReference>
<dbReference type="SMR" id="C1AU54"/>
<dbReference type="STRING" id="632772.ROP_08150"/>
<dbReference type="KEGG" id="rop:ROP_08150"/>
<dbReference type="PATRIC" id="fig|632772.20.peg.878"/>
<dbReference type="HOGENOM" id="CLU_028104_2_2_11"/>
<dbReference type="OrthoDB" id="9804126at2"/>
<dbReference type="UniPathway" id="UPA00219"/>
<dbReference type="Proteomes" id="UP000002212">
    <property type="component" value="Chromosome"/>
</dbReference>
<dbReference type="GO" id="GO:0005737">
    <property type="term" value="C:cytoplasm"/>
    <property type="evidence" value="ECO:0007669"/>
    <property type="project" value="UniProtKB-SubCell"/>
</dbReference>
<dbReference type="GO" id="GO:0005524">
    <property type="term" value="F:ATP binding"/>
    <property type="evidence" value="ECO:0007669"/>
    <property type="project" value="UniProtKB-UniRule"/>
</dbReference>
<dbReference type="GO" id="GO:0008763">
    <property type="term" value="F:UDP-N-acetylmuramate-L-alanine ligase activity"/>
    <property type="evidence" value="ECO:0007669"/>
    <property type="project" value="UniProtKB-UniRule"/>
</dbReference>
<dbReference type="GO" id="GO:0051301">
    <property type="term" value="P:cell division"/>
    <property type="evidence" value="ECO:0007669"/>
    <property type="project" value="UniProtKB-KW"/>
</dbReference>
<dbReference type="GO" id="GO:0071555">
    <property type="term" value="P:cell wall organization"/>
    <property type="evidence" value="ECO:0007669"/>
    <property type="project" value="UniProtKB-KW"/>
</dbReference>
<dbReference type="GO" id="GO:0009252">
    <property type="term" value="P:peptidoglycan biosynthetic process"/>
    <property type="evidence" value="ECO:0007669"/>
    <property type="project" value="UniProtKB-UniRule"/>
</dbReference>
<dbReference type="GO" id="GO:0008360">
    <property type="term" value="P:regulation of cell shape"/>
    <property type="evidence" value="ECO:0007669"/>
    <property type="project" value="UniProtKB-KW"/>
</dbReference>
<dbReference type="Gene3D" id="3.90.190.20">
    <property type="entry name" value="Mur ligase, C-terminal domain"/>
    <property type="match status" value="1"/>
</dbReference>
<dbReference type="Gene3D" id="3.40.1190.10">
    <property type="entry name" value="Mur-like, catalytic domain"/>
    <property type="match status" value="1"/>
</dbReference>
<dbReference type="Gene3D" id="3.40.50.720">
    <property type="entry name" value="NAD(P)-binding Rossmann-like Domain"/>
    <property type="match status" value="1"/>
</dbReference>
<dbReference type="HAMAP" id="MF_00046">
    <property type="entry name" value="MurC"/>
    <property type="match status" value="1"/>
</dbReference>
<dbReference type="InterPro" id="IPR036565">
    <property type="entry name" value="Mur-like_cat_sf"/>
</dbReference>
<dbReference type="InterPro" id="IPR004101">
    <property type="entry name" value="Mur_ligase_C"/>
</dbReference>
<dbReference type="InterPro" id="IPR036615">
    <property type="entry name" value="Mur_ligase_C_dom_sf"/>
</dbReference>
<dbReference type="InterPro" id="IPR013221">
    <property type="entry name" value="Mur_ligase_cen"/>
</dbReference>
<dbReference type="InterPro" id="IPR000713">
    <property type="entry name" value="Mur_ligase_N"/>
</dbReference>
<dbReference type="InterPro" id="IPR050061">
    <property type="entry name" value="MurCDEF_pg_biosynth"/>
</dbReference>
<dbReference type="InterPro" id="IPR005758">
    <property type="entry name" value="UDP-N-AcMur_Ala_ligase_MurC"/>
</dbReference>
<dbReference type="NCBIfam" id="TIGR01082">
    <property type="entry name" value="murC"/>
    <property type="match status" value="1"/>
</dbReference>
<dbReference type="PANTHER" id="PTHR43445:SF3">
    <property type="entry name" value="UDP-N-ACETYLMURAMATE--L-ALANINE LIGASE"/>
    <property type="match status" value="1"/>
</dbReference>
<dbReference type="PANTHER" id="PTHR43445">
    <property type="entry name" value="UDP-N-ACETYLMURAMATE--L-ALANINE LIGASE-RELATED"/>
    <property type="match status" value="1"/>
</dbReference>
<dbReference type="Pfam" id="PF01225">
    <property type="entry name" value="Mur_ligase"/>
    <property type="match status" value="1"/>
</dbReference>
<dbReference type="Pfam" id="PF02875">
    <property type="entry name" value="Mur_ligase_C"/>
    <property type="match status" value="1"/>
</dbReference>
<dbReference type="Pfam" id="PF08245">
    <property type="entry name" value="Mur_ligase_M"/>
    <property type="match status" value="1"/>
</dbReference>
<dbReference type="SUPFAM" id="SSF51984">
    <property type="entry name" value="MurCD N-terminal domain"/>
    <property type="match status" value="1"/>
</dbReference>
<dbReference type="SUPFAM" id="SSF53623">
    <property type="entry name" value="MurD-like peptide ligases, catalytic domain"/>
    <property type="match status" value="1"/>
</dbReference>
<dbReference type="SUPFAM" id="SSF53244">
    <property type="entry name" value="MurD-like peptide ligases, peptide-binding domain"/>
    <property type="match status" value="1"/>
</dbReference>
<evidence type="ECO:0000255" key="1">
    <source>
        <dbReference type="HAMAP-Rule" id="MF_00046"/>
    </source>
</evidence>
<comment type="function">
    <text evidence="1">Cell wall formation.</text>
</comment>
<comment type="catalytic activity">
    <reaction evidence="1">
        <text>UDP-N-acetyl-alpha-D-muramate + L-alanine + ATP = UDP-N-acetyl-alpha-D-muramoyl-L-alanine + ADP + phosphate + H(+)</text>
        <dbReference type="Rhea" id="RHEA:23372"/>
        <dbReference type="ChEBI" id="CHEBI:15378"/>
        <dbReference type="ChEBI" id="CHEBI:30616"/>
        <dbReference type="ChEBI" id="CHEBI:43474"/>
        <dbReference type="ChEBI" id="CHEBI:57972"/>
        <dbReference type="ChEBI" id="CHEBI:70757"/>
        <dbReference type="ChEBI" id="CHEBI:83898"/>
        <dbReference type="ChEBI" id="CHEBI:456216"/>
        <dbReference type="EC" id="6.3.2.8"/>
    </reaction>
</comment>
<comment type="pathway">
    <text evidence="1">Cell wall biogenesis; peptidoglycan biosynthesis.</text>
</comment>
<comment type="subcellular location">
    <subcellularLocation>
        <location evidence="1">Cytoplasm</location>
    </subcellularLocation>
</comment>
<comment type="similarity">
    <text evidence="1">Belongs to the MurCDEF family.</text>
</comment>
<keyword id="KW-0067">ATP-binding</keyword>
<keyword id="KW-0131">Cell cycle</keyword>
<keyword id="KW-0132">Cell division</keyword>
<keyword id="KW-0133">Cell shape</keyword>
<keyword id="KW-0961">Cell wall biogenesis/degradation</keyword>
<keyword id="KW-0963">Cytoplasm</keyword>
<keyword id="KW-0436">Ligase</keyword>
<keyword id="KW-0547">Nucleotide-binding</keyword>
<keyword id="KW-0573">Peptidoglycan synthesis</keyword>
<name>MURC_RHOOB</name>
<protein>
    <recommendedName>
        <fullName evidence="1">UDP-N-acetylmuramate--L-alanine ligase</fullName>
        <ecNumber evidence="1">6.3.2.8</ecNumber>
    </recommendedName>
    <alternativeName>
        <fullName evidence="1">UDP-N-acetylmuramoyl-L-alanine synthetase</fullName>
    </alternativeName>
</protein>
<organism>
    <name type="scientific">Rhodococcus opacus (strain B4)</name>
    <dbReference type="NCBI Taxonomy" id="632772"/>
    <lineage>
        <taxon>Bacteria</taxon>
        <taxon>Bacillati</taxon>
        <taxon>Actinomycetota</taxon>
        <taxon>Actinomycetes</taxon>
        <taxon>Mycobacteriales</taxon>
        <taxon>Nocardiaceae</taxon>
        <taxon>Rhodococcus</taxon>
    </lineage>
</organism>
<feature type="chain" id="PRO_1000192108" description="UDP-N-acetylmuramate--L-alanine ligase">
    <location>
        <begin position="1"/>
        <end position="503"/>
    </location>
</feature>
<feature type="binding site" evidence="1">
    <location>
        <begin position="120"/>
        <end position="126"/>
    </location>
    <ligand>
        <name>ATP</name>
        <dbReference type="ChEBI" id="CHEBI:30616"/>
    </ligand>
</feature>
<gene>
    <name evidence="1" type="primary">murC</name>
    <name type="ordered locus">ROP_08150</name>
</gene>
<sequence length="503" mass="52639">MTDLPAQLERVHMVGIGGAGMSGIARILLARGGQVSGSDAKESRGVLALRARGAQVRIGHDAGALDLLPGGPTVVVTTHAAIPKDNPELVEAARRGIPVILRPAVLASLMQGHRTLLVSGTHGKTSTTSMLVVALQHCGFDPSFAVGGELNEAGTNAHHGSGDVFVAEADESDGSLLQYDPNVVVVTNVEADHLDYFGSPEAYIQVFDDFAARLSHGGLLVACLDDPGSAALAQRVAARGLPGVRVLGYGSAEDADGAFAPIDGVEVGARLLSFEARDVGGVLQFQLAGEQAPRTIRMNVPGRHMALNALAALLAAREAGADVDEILEGIAGFGGVHRRFQFTGREHGVRVFDDYAHHPTEVRAVLGAAADLVSQPHEADRRESEEPVRSGKVIVVFQPHLYSRTATFAEEFGHALDLADEVMVLDVYGAREEPLPGVSGALVALSVSKPVHYQPDLSQAPRQVAALASPGDVVITMGAGDVTMLGNQILDALRAAPHHHPSR</sequence>
<reference key="1">
    <citation type="submission" date="2009-03" db="EMBL/GenBank/DDBJ databases">
        <title>Comparison of the complete genome sequences of Rhodococcus erythropolis PR4 and Rhodococcus opacus B4.</title>
        <authorList>
            <person name="Takarada H."/>
            <person name="Sekine M."/>
            <person name="Hosoyama A."/>
            <person name="Yamada R."/>
            <person name="Fujisawa T."/>
            <person name="Omata S."/>
            <person name="Shimizu A."/>
            <person name="Tsukatani N."/>
            <person name="Tanikawa S."/>
            <person name="Fujita N."/>
            <person name="Harayama S."/>
        </authorList>
    </citation>
    <scope>NUCLEOTIDE SEQUENCE [LARGE SCALE GENOMIC DNA]</scope>
    <source>
        <strain>B4</strain>
    </source>
</reference>
<accession>C1AU54</accession>